<organism>
    <name type="scientific">Korarchaeum cryptofilum (strain OPF8)</name>
    <dbReference type="NCBI Taxonomy" id="374847"/>
    <lineage>
        <taxon>Archaea</taxon>
        <taxon>Thermoproteota</taxon>
        <taxon>Candidatus Korarchaeia</taxon>
        <taxon>Candidatus Korarchaeales</taxon>
        <taxon>Candidatus Korarchaeaceae</taxon>
        <taxon>Candidatus Korarchaeum</taxon>
    </lineage>
</organism>
<reference key="1">
    <citation type="journal article" date="2008" name="Proc. Natl. Acad. Sci. U.S.A.">
        <title>A korarchaeal genome reveals new insights into the evolution of the Archaea.</title>
        <authorList>
            <person name="Elkins J.G."/>
            <person name="Podar M."/>
            <person name="Graham D.E."/>
            <person name="Makarova K.S."/>
            <person name="Wolf Y."/>
            <person name="Randau L."/>
            <person name="Hedlund B.P."/>
            <person name="Brochier-Armanet C."/>
            <person name="Kunin V."/>
            <person name="Anderson I."/>
            <person name="Lapidus A."/>
            <person name="Goltsman E."/>
            <person name="Barry K."/>
            <person name="Koonin E.V."/>
            <person name="Hugenholtz P."/>
            <person name="Kyrpides N."/>
            <person name="Wanner G."/>
            <person name="Richardson P."/>
            <person name="Keller M."/>
            <person name="Stetter K.O."/>
        </authorList>
    </citation>
    <scope>NUCLEOTIDE SEQUENCE [LARGE SCALE GENOMIC DNA]</scope>
    <source>
        <strain>OPF8</strain>
    </source>
</reference>
<evidence type="ECO:0000255" key="1">
    <source>
        <dbReference type="HAMAP-Rule" id="MF_00508"/>
    </source>
</evidence>
<evidence type="ECO:0000305" key="2"/>
<feature type="chain" id="PRO_1000127140" description="Small ribosomal subunit protein uS10">
    <location>
        <begin position="1"/>
        <end position="103"/>
    </location>
</feature>
<proteinExistence type="inferred from homology"/>
<sequence>MTEILRIELVSVNPESLEKVSRMFKEIADKMGVRVKGPIPLPTKRLRVTALRNPSGEGTNRYDKYELRIHKRIIDIPNPDERYIRSIMGITLPDDVKISIVLM</sequence>
<dbReference type="EMBL" id="CP000968">
    <property type="protein sequence ID" value="ACB08241.1"/>
    <property type="molecule type" value="Genomic_DNA"/>
</dbReference>
<dbReference type="RefSeq" id="WP_012310138.1">
    <property type="nucleotide sequence ID" value="NC_010482.1"/>
</dbReference>
<dbReference type="SMR" id="B1L712"/>
<dbReference type="FunCoup" id="B1L712">
    <property type="interactions" value="160"/>
</dbReference>
<dbReference type="STRING" id="374847.Kcr_1495"/>
<dbReference type="EnsemblBacteria" id="ACB08241">
    <property type="protein sequence ID" value="ACB08241"/>
    <property type="gene ID" value="Kcr_1495"/>
</dbReference>
<dbReference type="GeneID" id="6094772"/>
<dbReference type="KEGG" id="kcr:Kcr_1495"/>
<dbReference type="eggNOG" id="arCOG01758">
    <property type="taxonomic scope" value="Archaea"/>
</dbReference>
<dbReference type="HOGENOM" id="CLU_122625_0_1_2"/>
<dbReference type="InParanoid" id="B1L712"/>
<dbReference type="OrthoDB" id="371736at2157"/>
<dbReference type="PhylomeDB" id="B1L712"/>
<dbReference type="Proteomes" id="UP000001686">
    <property type="component" value="Chromosome"/>
</dbReference>
<dbReference type="GO" id="GO:0022627">
    <property type="term" value="C:cytosolic small ribosomal subunit"/>
    <property type="evidence" value="ECO:0000318"/>
    <property type="project" value="GO_Central"/>
</dbReference>
<dbReference type="GO" id="GO:0003735">
    <property type="term" value="F:structural constituent of ribosome"/>
    <property type="evidence" value="ECO:0000318"/>
    <property type="project" value="GO_Central"/>
</dbReference>
<dbReference type="GO" id="GO:0000049">
    <property type="term" value="F:tRNA binding"/>
    <property type="evidence" value="ECO:0007669"/>
    <property type="project" value="UniProtKB-UniRule"/>
</dbReference>
<dbReference type="GO" id="GO:0006412">
    <property type="term" value="P:translation"/>
    <property type="evidence" value="ECO:0007669"/>
    <property type="project" value="UniProtKB-UniRule"/>
</dbReference>
<dbReference type="Gene3D" id="3.30.70.600">
    <property type="entry name" value="Ribosomal protein S10 domain"/>
    <property type="match status" value="1"/>
</dbReference>
<dbReference type="HAMAP" id="MF_00508">
    <property type="entry name" value="Ribosomal_uS10"/>
    <property type="match status" value="1"/>
</dbReference>
<dbReference type="InterPro" id="IPR001848">
    <property type="entry name" value="Ribosomal_uS10"/>
</dbReference>
<dbReference type="InterPro" id="IPR018268">
    <property type="entry name" value="Ribosomal_uS10_CS"/>
</dbReference>
<dbReference type="InterPro" id="IPR027486">
    <property type="entry name" value="Ribosomal_uS10_dom"/>
</dbReference>
<dbReference type="InterPro" id="IPR036838">
    <property type="entry name" value="Ribosomal_uS10_dom_sf"/>
</dbReference>
<dbReference type="InterPro" id="IPR005729">
    <property type="entry name" value="Ribosomal_uS10_euk/arc"/>
</dbReference>
<dbReference type="NCBIfam" id="TIGR01046">
    <property type="entry name" value="uS10_euk_arch"/>
    <property type="match status" value="1"/>
</dbReference>
<dbReference type="PANTHER" id="PTHR11700">
    <property type="entry name" value="30S RIBOSOMAL PROTEIN S10 FAMILY MEMBER"/>
    <property type="match status" value="1"/>
</dbReference>
<dbReference type="Pfam" id="PF00338">
    <property type="entry name" value="Ribosomal_S10"/>
    <property type="match status" value="1"/>
</dbReference>
<dbReference type="PRINTS" id="PR00971">
    <property type="entry name" value="RIBOSOMALS10"/>
</dbReference>
<dbReference type="SMART" id="SM01403">
    <property type="entry name" value="Ribosomal_S10"/>
    <property type="match status" value="1"/>
</dbReference>
<dbReference type="SUPFAM" id="SSF54999">
    <property type="entry name" value="Ribosomal protein S10"/>
    <property type="match status" value="1"/>
</dbReference>
<dbReference type="PROSITE" id="PS00361">
    <property type="entry name" value="RIBOSOMAL_S10"/>
    <property type="match status" value="1"/>
</dbReference>
<comment type="function">
    <text evidence="1">Involved in the binding of tRNA to the ribosomes.</text>
</comment>
<comment type="subunit">
    <text evidence="1">Part of the 30S ribosomal subunit.</text>
</comment>
<comment type="similarity">
    <text evidence="1">Belongs to the universal ribosomal protein uS10 family.</text>
</comment>
<keyword id="KW-1185">Reference proteome</keyword>
<keyword id="KW-0687">Ribonucleoprotein</keyword>
<keyword id="KW-0689">Ribosomal protein</keyword>
<protein>
    <recommendedName>
        <fullName evidence="1">Small ribosomal subunit protein uS10</fullName>
    </recommendedName>
    <alternativeName>
        <fullName evidence="2">30S ribosomal protein S10</fullName>
    </alternativeName>
</protein>
<gene>
    <name evidence="1" type="primary">rps10</name>
    <name type="ordered locus">Kcr_1495</name>
</gene>
<name>RS10_KORCO</name>
<accession>B1L712</accession>